<feature type="chain" id="PRO_0000129035" description="Hydrogenase maturation factor HypA 2">
    <location>
        <begin position="1"/>
        <end position="113"/>
    </location>
</feature>
<feature type="binding site" evidence="1">
    <location>
        <position position="2"/>
    </location>
    <ligand>
        <name>Ni(2+)</name>
        <dbReference type="ChEBI" id="CHEBI:49786"/>
    </ligand>
</feature>
<feature type="binding site" evidence="1">
    <location>
        <position position="73"/>
    </location>
    <ligand>
        <name>Zn(2+)</name>
        <dbReference type="ChEBI" id="CHEBI:29105"/>
    </ligand>
</feature>
<feature type="binding site" evidence="1">
    <location>
        <position position="76"/>
    </location>
    <ligand>
        <name>Zn(2+)</name>
        <dbReference type="ChEBI" id="CHEBI:29105"/>
    </ligand>
</feature>
<feature type="binding site" evidence="1">
    <location>
        <position position="89"/>
    </location>
    <ligand>
        <name>Zn(2+)</name>
        <dbReference type="ChEBI" id="CHEBI:29105"/>
    </ligand>
</feature>
<feature type="binding site" evidence="1">
    <location>
        <position position="92"/>
    </location>
    <ligand>
        <name>Zn(2+)</name>
        <dbReference type="ChEBI" id="CHEBI:29105"/>
    </ligand>
</feature>
<proteinExistence type="inferred from homology"/>
<keyword id="KW-0479">Metal-binding</keyword>
<keyword id="KW-0533">Nickel</keyword>
<keyword id="KW-1185">Reference proteome</keyword>
<keyword id="KW-0862">Zinc</keyword>
<reference key="1">
    <citation type="journal article" date="1994" name="Biochim. Biophys. Acta">
        <title>Nucleotide sequences of two hydrogenase-related genes (hypA and hypB) from Bradyrhizobium japonicum, one of which (hypB) encodes an extremely histidine-rich region and guanine nucleotide-binding domains.</title>
        <authorList>
            <person name="Fu C."/>
            <person name="Maier R.J."/>
        </authorList>
    </citation>
    <scope>NUCLEOTIDE SEQUENCE [GENOMIC DNA]</scope>
    <source>
        <strain>JCM 10833 / BCRC 13528 / IAM 13628 / NBRC 14792 / USDA 110</strain>
    </source>
</reference>
<reference key="2">
    <citation type="journal article" date="2002" name="DNA Res.">
        <title>Complete genomic sequence of nitrogen-fixing symbiotic bacterium Bradyrhizobium japonicum USDA110.</title>
        <authorList>
            <person name="Kaneko T."/>
            <person name="Nakamura Y."/>
            <person name="Sato S."/>
            <person name="Minamisawa K."/>
            <person name="Uchiumi T."/>
            <person name="Sasamoto S."/>
            <person name="Watanabe A."/>
            <person name="Idesawa K."/>
            <person name="Iriguchi M."/>
            <person name="Kawashima K."/>
            <person name="Kohara M."/>
            <person name="Matsumoto M."/>
            <person name="Shimpo S."/>
            <person name="Tsuruoka H."/>
            <person name="Wada T."/>
            <person name="Yamada M."/>
            <person name="Tabata S."/>
        </authorList>
    </citation>
    <scope>NUCLEOTIDE SEQUENCE [LARGE SCALE GENOMIC DNA]</scope>
    <source>
        <strain>JCM 10833 / BCRC 13528 / IAM 13628 / NBRC 14792 / USDA 110</strain>
    </source>
</reference>
<name>HYPA2_BRADU</name>
<protein>
    <recommendedName>
        <fullName evidence="1">Hydrogenase maturation factor HypA 2</fullName>
    </recommendedName>
</protein>
<dbReference type="EMBL" id="L24513">
    <property type="protein sequence ID" value="AAA17762.1"/>
    <property type="molecule type" value="Unassigned_DNA"/>
</dbReference>
<dbReference type="EMBL" id="BA000040">
    <property type="protein sequence ID" value="BAC52197.1"/>
    <property type="molecule type" value="Genomic_DNA"/>
</dbReference>
<dbReference type="RefSeq" id="NP_773572.1">
    <property type="nucleotide sequence ID" value="NC_004463.1"/>
</dbReference>
<dbReference type="RefSeq" id="WP_011089670.1">
    <property type="nucleotide sequence ID" value="NC_004463.1"/>
</dbReference>
<dbReference type="SMR" id="Q45256"/>
<dbReference type="FunCoup" id="Q45256">
    <property type="interactions" value="72"/>
</dbReference>
<dbReference type="STRING" id="224911.AAV28_32250"/>
<dbReference type="EnsemblBacteria" id="BAC52197">
    <property type="protein sequence ID" value="BAC52197"/>
    <property type="gene ID" value="BAC52197"/>
</dbReference>
<dbReference type="GeneID" id="46493898"/>
<dbReference type="KEGG" id="bja:bll6932"/>
<dbReference type="PATRIC" id="fig|224911.44.peg.6966"/>
<dbReference type="eggNOG" id="COG0375">
    <property type="taxonomic scope" value="Bacteria"/>
</dbReference>
<dbReference type="HOGENOM" id="CLU_126929_0_0_5"/>
<dbReference type="InParanoid" id="Q45256"/>
<dbReference type="OrthoDB" id="288014at2"/>
<dbReference type="PhylomeDB" id="Q45256"/>
<dbReference type="Proteomes" id="UP000002526">
    <property type="component" value="Chromosome"/>
</dbReference>
<dbReference type="GO" id="GO:0016151">
    <property type="term" value="F:nickel cation binding"/>
    <property type="evidence" value="ECO:0000318"/>
    <property type="project" value="GO_Central"/>
</dbReference>
<dbReference type="GO" id="GO:0008270">
    <property type="term" value="F:zinc ion binding"/>
    <property type="evidence" value="ECO:0000318"/>
    <property type="project" value="GO_Central"/>
</dbReference>
<dbReference type="GO" id="GO:0051604">
    <property type="term" value="P:protein maturation"/>
    <property type="evidence" value="ECO:0000318"/>
    <property type="project" value="GO_Central"/>
</dbReference>
<dbReference type="GO" id="GO:0036211">
    <property type="term" value="P:protein modification process"/>
    <property type="evidence" value="ECO:0007669"/>
    <property type="project" value="UniProtKB-UniRule"/>
</dbReference>
<dbReference type="FunFam" id="3.30.2320.80:FF:000001">
    <property type="entry name" value="Hydrogenase maturation factor HypA"/>
    <property type="match status" value="1"/>
</dbReference>
<dbReference type="Gene3D" id="3.30.2320.80">
    <property type="match status" value="1"/>
</dbReference>
<dbReference type="HAMAP" id="MF_00213">
    <property type="entry name" value="HypA_HybF"/>
    <property type="match status" value="1"/>
</dbReference>
<dbReference type="InterPro" id="IPR020538">
    <property type="entry name" value="Hydgase_Ni_incorp_HypA/HybF_CS"/>
</dbReference>
<dbReference type="InterPro" id="IPR000688">
    <property type="entry name" value="HypA/HybF"/>
</dbReference>
<dbReference type="NCBIfam" id="TIGR00100">
    <property type="entry name" value="hypA"/>
    <property type="match status" value="1"/>
</dbReference>
<dbReference type="PANTHER" id="PTHR34535">
    <property type="entry name" value="HYDROGENASE MATURATION FACTOR HYPA"/>
    <property type="match status" value="1"/>
</dbReference>
<dbReference type="PANTHER" id="PTHR34535:SF3">
    <property type="entry name" value="HYDROGENASE MATURATION FACTOR HYPA"/>
    <property type="match status" value="1"/>
</dbReference>
<dbReference type="Pfam" id="PF01155">
    <property type="entry name" value="HypA"/>
    <property type="match status" value="1"/>
</dbReference>
<dbReference type="PIRSF" id="PIRSF004761">
    <property type="entry name" value="Hydrgn_mat_HypA"/>
    <property type="match status" value="1"/>
</dbReference>
<dbReference type="PROSITE" id="PS01249">
    <property type="entry name" value="HYPA"/>
    <property type="match status" value="1"/>
</dbReference>
<sequence length="113" mass="12331">MHEMALCEGIIGIVEEEARKRAFAKVNVVCLEIGALSHVAPEALQFCFEAVAARTIAQGAKLEIVETPGTAWCMACSKSVEIKQRYEPCPSCGGYQLQVTGGEEMRVRELEVD</sequence>
<accession>Q45256</accession>
<evidence type="ECO:0000255" key="1">
    <source>
        <dbReference type="HAMAP-Rule" id="MF_00213"/>
    </source>
</evidence>
<evidence type="ECO:0000305" key="2"/>
<gene>
    <name evidence="1" type="primary">hypA2</name>
    <name type="synonym">hypA</name>
    <name type="ordered locus">bll6932</name>
</gene>
<organism>
    <name type="scientific">Bradyrhizobium diazoefficiens (strain JCM 10833 / BCRC 13528 / IAM 13628 / NBRC 14792 / USDA 110)</name>
    <dbReference type="NCBI Taxonomy" id="224911"/>
    <lineage>
        <taxon>Bacteria</taxon>
        <taxon>Pseudomonadati</taxon>
        <taxon>Pseudomonadota</taxon>
        <taxon>Alphaproteobacteria</taxon>
        <taxon>Hyphomicrobiales</taxon>
        <taxon>Nitrobacteraceae</taxon>
        <taxon>Bradyrhizobium</taxon>
    </lineage>
</organism>
<comment type="function">
    <text evidence="1">Involved in the maturation of [NiFe] hydrogenases. Required for nickel insertion into the metal center of the hydrogenase.</text>
</comment>
<comment type="similarity">
    <text evidence="1 2">Belongs to the HypA/HybF family.</text>
</comment>